<accession>Q2SZ53</accession>
<feature type="chain" id="PRO_0000332412" description="Crossover junction endodeoxyribonuclease RuvC">
    <location>
        <begin position="1"/>
        <end position="180"/>
    </location>
</feature>
<feature type="active site" evidence="1">
    <location>
        <position position="7"/>
    </location>
</feature>
<feature type="active site" evidence="1">
    <location>
        <position position="66"/>
    </location>
</feature>
<feature type="active site" evidence="1">
    <location>
        <position position="138"/>
    </location>
</feature>
<feature type="binding site" evidence="1">
    <location>
        <position position="7"/>
    </location>
    <ligand>
        <name>Mg(2+)</name>
        <dbReference type="ChEBI" id="CHEBI:18420"/>
        <label>1</label>
    </ligand>
</feature>
<feature type="binding site" evidence="1">
    <location>
        <position position="66"/>
    </location>
    <ligand>
        <name>Mg(2+)</name>
        <dbReference type="ChEBI" id="CHEBI:18420"/>
        <label>2</label>
    </ligand>
</feature>
<feature type="binding site" evidence="1">
    <location>
        <position position="138"/>
    </location>
    <ligand>
        <name>Mg(2+)</name>
        <dbReference type="ChEBI" id="CHEBI:18420"/>
        <label>1</label>
    </ligand>
</feature>
<comment type="function">
    <text evidence="1">The RuvA-RuvB-RuvC complex processes Holliday junction (HJ) DNA during genetic recombination and DNA repair. Endonuclease that resolves HJ intermediates. Cleaves cruciform DNA by making single-stranded nicks across the HJ at symmetrical positions within the homologous arms, yielding a 5'-phosphate and a 3'-hydroxyl group; requires a central core of homology in the junction. The consensus cleavage sequence is 5'-(A/T)TT(C/G)-3'. Cleavage occurs on the 3'-side of the TT dinucleotide at the point of strand exchange. HJ branch migration catalyzed by RuvA-RuvB allows RuvC to scan DNA until it finds its consensus sequence, where it cleaves and resolves the cruciform DNA.</text>
</comment>
<comment type="catalytic activity">
    <reaction evidence="1">
        <text>Endonucleolytic cleavage at a junction such as a reciprocal single-stranded crossover between two homologous DNA duplexes (Holliday junction).</text>
        <dbReference type="EC" id="3.1.21.10"/>
    </reaction>
</comment>
<comment type="cofactor">
    <cofactor evidence="1">
        <name>Mg(2+)</name>
        <dbReference type="ChEBI" id="CHEBI:18420"/>
    </cofactor>
    <text evidence="1">Binds 2 Mg(2+) ion per subunit.</text>
</comment>
<comment type="subunit">
    <text evidence="1">Homodimer which binds Holliday junction (HJ) DNA. The HJ becomes 2-fold symmetrical on binding to RuvC with unstacked arms; it has a different conformation from HJ DNA in complex with RuvA. In the full resolvosome a probable DNA-RuvA(4)-RuvB(12)-RuvC(2) complex forms which resolves the HJ.</text>
</comment>
<comment type="subcellular location">
    <subcellularLocation>
        <location evidence="1">Cytoplasm</location>
    </subcellularLocation>
</comment>
<comment type="similarity">
    <text evidence="1">Belongs to the RuvC family.</text>
</comment>
<comment type="sequence caution" evidence="2">
    <conflict type="erroneous initiation">
        <sequence resource="EMBL-CDS" id="ABC36337"/>
    </conflict>
    <text>Extended N-terminus.</text>
</comment>
<organism>
    <name type="scientific">Burkholderia thailandensis (strain ATCC 700388 / DSM 13276 / CCUG 48851 / CIP 106301 / E264)</name>
    <dbReference type="NCBI Taxonomy" id="271848"/>
    <lineage>
        <taxon>Bacteria</taxon>
        <taxon>Pseudomonadati</taxon>
        <taxon>Pseudomonadota</taxon>
        <taxon>Betaproteobacteria</taxon>
        <taxon>Burkholderiales</taxon>
        <taxon>Burkholderiaceae</taxon>
        <taxon>Burkholderia</taxon>
        <taxon>pseudomallei group</taxon>
    </lineage>
</organism>
<gene>
    <name evidence="1" type="primary">ruvC</name>
    <name type="ordered locus">BTH_I1249</name>
</gene>
<proteinExistence type="inferred from homology"/>
<sequence>MRILGIDPGLRVTGFGVIDVSGHRLAYVASGVIKTPTADLPTRLGTIYDGVSTLIREHTPDQAAIEKVFVNVNPQSTLLLGQARGAAICGLVSGGLPVAEYTALQLKQAVVGYGRATKEQMQEMVARLLSLSGLPGTDAADALGMAICHAHGGNTLNTLGGIAPALAKKGLRVRRGRLVG</sequence>
<evidence type="ECO:0000255" key="1">
    <source>
        <dbReference type="HAMAP-Rule" id="MF_00034"/>
    </source>
</evidence>
<evidence type="ECO:0000305" key="2"/>
<name>RUVC_BURTA</name>
<protein>
    <recommendedName>
        <fullName evidence="1">Crossover junction endodeoxyribonuclease RuvC</fullName>
        <ecNumber evidence="1">3.1.21.10</ecNumber>
    </recommendedName>
    <alternativeName>
        <fullName evidence="1">Holliday junction nuclease RuvC</fullName>
    </alternativeName>
    <alternativeName>
        <fullName evidence="1">Holliday junction resolvase RuvC</fullName>
    </alternativeName>
</protein>
<dbReference type="EC" id="3.1.21.10" evidence="1"/>
<dbReference type="EMBL" id="CP000086">
    <property type="protein sequence ID" value="ABC36337.1"/>
    <property type="status" value="ALT_INIT"/>
    <property type="molecule type" value="Genomic_DNA"/>
</dbReference>
<dbReference type="RefSeq" id="WP_009889144.1">
    <property type="nucleotide sequence ID" value="NZ_CP008785.1"/>
</dbReference>
<dbReference type="SMR" id="Q2SZ53"/>
<dbReference type="GeneID" id="45120996"/>
<dbReference type="KEGG" id="bte:BTH_I1249"/>
<dbReference type="HOGENOM" id="CLU_890471_0_0_4"/>
<dbReference type="Proteomes" id="UP000001930">
    <property type="component" value="Chromosome I"/>
</dbReference>
<dbReference type="GO" id="GO:0005737">
    <property type="term" value="C:cytoplasm"/>
    <property type="evidence" value="ECO:0007669"/>
    <property type="project" value="UniProtKB-SubCell"/>
</dbReference>
<dbReference type="GO" id="GO:0048476">
    <property type="term" value="C:Holliday junction resolvase complex"/>
    <property type="evidence" value="ECO:0007669"/>
    <property type="project" value="UniProtKB-UniRule"/>
</dbReference>
<dbReference type="GO" id="GO:0008821">
    <property type="term" value="F:crossover junction DNA endonuclease activity"/>
    <property type="evidence" value="ECO:0007669"/>
    <property type="project" value="UniProtKB-UniRule"/>
</dbReference>
<dbReference type="GO" id="GO:0003677">
    <property type="term" value="F:DNA binding"/>
    <property type="evidence" value="ECO:0007669"/>
    <property type="project" value="UniProtKB-KW"/>
</dbReference>
<dbReference type="GO" id="GO:0000287">
    <property type="term" value="F:magnesium ion binding"/>
    <property type="evidence" value="ECO:0007669"/>
    <property type="project" value="UniProtKB-UniRule"/>
</dbReference>
<dbReference type="GO" id="GO:0006310">
    <property type="term" value="P:DNA recombination"/>
    <property type="evidence" value="ECO:0007669"/>
    <property type="project" value="UniProtKB-UniRule"/>
</dbReference>
<dbReference type="GO" id="GO:0006281">
    <property type="term" value="P:DNA repair"/>
    <property type="evidence" value="ECO:0007669"/>
    <property type="project" value="UniProtKB-UniRule"/>
</dbReference>
<dbReference type="CDD" id="cd16962">
    <property type="entry name" value="RuvC"/>
    <property type="match status" value="1"/>
</dbReference>
<dbReference type="FunFam" id="3.30.420.10:FF:000002">
    <property type="entry name" value="Crossover junction endodeoxyribonuclease RuvC"/>
    <property type="match status" value="1"/>
</dbReference>
<dbReference type="Gene3D" id="3.30.420.10">
    <property type="entry name" value="Ribonuclease H-like superfamily/Ribonuclease H"/>
    <property type="match status" value="1"/>
</dbReference>
<dbReference type="HAMAP" id="MF_00034">
    <property type="entry name" value="RuvC"/>
    <property type="match status" value="1"/>
</dbReference>
<dbReference type="InterPro" id="IPR012337">
    <property type="entry name" value="RNaseH-like_sf"/>
</dbReference>
<dbReference type="InterPro" id="IPR036397">
    <property type="entry name" value="RNaseH_sf"/>
</dbReference>
<dbReference type="InterPro" id="IPR020563">
    <property type="entry name" value="X-over_junc_endoDNase_Mg_BS"/>
</dbReference>
<dbReference type="InterPro" id="IPR002176">
    <property type="entry name" value="X-over_junc_endoDNase_RuvC"/>
</dbReference>
<dbReference type="NCBIfam" id="TIGR00228">
    <property type="entry name" value="ruvC"/>
    <property type="match status" value="1"/>
</dbReference>
<dbReference type="PANTHER" id="PTHR30194">
    <property type="entry name" value="CROSSOVER JUNCTION ENDODEOXYRIBONUCLEASE RUVC"/>
    <property type="match status" value="1"/>
</dbReference>
<dbReference type="PANTHER" id="PTHR30194:SF3">
    <property type="entry name" value="CROSSOVER JUNCTION ENDODEOXYRIBONUCLEASE RUVC"/>
    <property type="match status" value="1"/>
</dbReference>
<dbReference type="Pfam" id="PF02075">
    <property type="entry name" value="RuvC"/>
    <property type="match status" value="1"/>
</dbReference>
<dbReference type="PRINTS" id="PR00696">
    <property type="entry name" value="RSOLVASERUVC"/>
</dbReference>
<dbReference type="SUPFAM" id="SSF53098">
    <property type="entry name" value="Ribonuclease H-like"/>
    <property type="match status" value="1"/>
</dbReference>
<dbReference type="PROSITE" id="PS01321">
    <property type="entry name" value="RUVC"/>
    <property type="match status" value="1"/>
</dbReference>
<keyword id="KW-0963">Cytoplasm</keyword>
<keyword id="KW-0227">DNA damage</keyword>
<keyword id="KW-0233">DNA recombination</keyword>
<keyword id="KW-0234">DNA repair</keyword>
<keyword id="KW-0238">DNA-binding</keyword>
<keyword id="KW-0255">Endonuclease</keyword>
<keyword id="KW-0378">Hydrolase</keyword>
<keyword id="KW-0460">Magnesium</keyword>
<keyword id="KW-0479">Metal-binding</keyword>
<keyword id="KW-0540">Nuclease</keyword>
<reference key="1">
    <citation type="journal article" date="2005" name="BMC Genomics">
        <title>Bacterial genome adaptation to niches: divergence of the potential virulence genes in three Burkholderia species of different survival strategies.</title>
        <authorList>
            <person name="Kim H.S."/>
            <person name="Schell M.A."/>
            <person name="Yu Y."/>
            <person name="Ulrich R.L."/>
            <person name="Sarria S.H."/>
            <person name="Nierman W.C."/>
            <person name="DeShazer D."/>
        </authorList>
    </citation>
    <scope>NUCLEOTIDE SEQUENCE [LARGE SCALE GENOMIC DNA]</scope>
    <source>
        <strain>ATCC 700388 / DSM 13276 / CCUG 48851 / CIP 106301 / E264</strain>
    </source>
</reference>